<comment type="function">
    <text evidence="3 4 5">Serine/threonine protein phosphatase that may dephosphorylate and activate lipin-like phosphatases (PubMed:22134922). Lipins are phosphatidate phosphatases that catalyze the conversion of phosphatidic acid to diacylglycerol and control the metabolism of fatty acids at different levels (PubMed:22134922). May indirectly modulate the lipid composition of nuclear and/or endoplasmic reticulum membranes and be required for proper nuclear membrane morphology and/or dynamics (PubMed:22134922, PubMed:35852146). Contributes to closure of nuclear envelope (NE) holes and prevents excess nuclear membranes after meiosis and mitosis, possibly through spatial regulation of lipin (PubMed:32271860). May limit the production of endoplasmic reticulum (ER) sheets proximal to the NE to prevent the ER membranes that feed into NE openings from invading the nuclear interior and thereby restrict nuclear transport to nuclear pore complexes (NPCs) (PubMed:32271860). May also indirectly regulate the production of lipid droplets and triacylglycerol (PubMed:22134922).</text>
</comment>
<comment type="catalytic activity">
    <reaction>
        <text>O-phospho-L-seryl-[protein] + H2O = L-seryl-[protein] + phosphate</text>
        <dbReference type="Rhea" id="RHEA:20629"/>
        <dbReference type="Rhea" id="RHEA-COMP:9863"/>
        <dbReference type="Rhea" id="RHEA-COMP:11604"/>
        <dbReference type="ChEBI" id="CHEBI:15377"/>
        <dbReference type="ChEBI" id="CHEBI:29999"/>
        <dbReference type="ChEBI" id="CHEBI:43474"/>
        <dbReference type="ChEBI" id="CHEBI:83421"/>
        <dbReference type="EC" id="3.1.3.16"/>
    </reaction>
</comment>
<comment type="catalytic activity">
    <reaction>
        <text>O-phospho-L-threonyl-[protein] + H2O = L-threonyl-[protein] + phosphate</text>
        <dbReference type="Rhea" id="RHEA:47004"/>
        <dbReference type="Rhea" id="RHEA-COMP:11060"/>
        <dbReference type="Rhea" id="RHEA-COMP:11605"/>
        <dbReference type="ChEBI" id="CHEBI:15377"/>
        <dbReference type="ChEBI" id="CHEBI:30013"/>
        <dbReference type="ChEBI" id="CHEBI:43474"/>
        <dbReference type="ChEBI" id="CHEBI:61977"/>
        <dbReference type="EC" id="3.1.3.16"/>
    </reaction>
</comment>
<comment type="subcellular location">
    <subcellularLocation>
        <location evidence="6">Membrane</location>
        <topology evidence="6">Single-pass membrane protein</topology>
    </subcellularLocation>
    <subcellularLocation>
        <location evidence="4">Nucleus envelope</location>
    </subcellularLocation>
</comment>
<comment type="alternative products">
    <event type="alternative splicing"/>
    <isoform>
        <id>Q20432-1</id>
        <name>a</name>
        <sequence type="displayed"/>
    </isoform>
    <isoform>
        <id>Q20432-2</id>
        <name>b</name>
        <sequence type="described" ref="VSP_056100"/>
    </isoform>
</comment>
<comment type="disruption phenotype">
    <text evidence="4 5">Excess of internal nuclear membranes in oocyte-derived pronuclei that are nearly or completely bisecting the nucleus in embryos during nuclear closure (PubMed:32271860). Increased phosphatidylinositol (PI) production and ectopic ER sheets (PubMed:32271860). Nuclei contain openings through which imported proteins passively diffuse (PubMed:32271860). Increase in embryo nuclear size (PubMed:35852146). Twinned nuclei after mitosis (PubMed:32271860). Simultaneous knockdown of chmp-7 or lem-2 leads to enhanced nuclear sealing defects (PubMed:32271860).</text>
</comment>
<comment type="similarity">
    <text evidence="6">Belongs to the dullard family.</text>
</comment>
<evidence type="ECO:0000255" key="1"/>
<evidence type="ECO:0000255" key="2">
    <source>
        <dbReference type="PROSITE-ProRule" id="PRU00336"/>
    </source>
</evidence>
<evidence type="ECO:0000269" key="3">
    <source>
    </source>
</evidence>
<evidence type="ECO:0000269" key="4">
    <source>
    </source>
</evidence>
<evidence type="ECO:0000269" key="5">
    <source>
    </source>
</evidence>
<evidence type="ECO:0000305" key="6"/>
<dbReference type="EC" id="3.1.3.16"/>
<dbReference type="EMBL" id="FO080734">
    <property type="protein sequence ID" value="CCD66263.1"/>
    <property type="molecule type" value="Genomic_DNA"/>
</dbReference>
<dbReference type="EMBL" id="FO080734">
    <property type="protein sequence ID" value="CCF23398.1"/>
    <property type="molecule type" value="Genomic_DNA"/>
</dbReference>
<dbReference type="PIR" id="T16371">
    <property type="entry name" value="T16371"/>
</dbReference>
<dbReference type="RefSeq" id="NP_001254123.1">
    <molecule id="Q20432-2"/>
    <property type="nucleotide sequence ID" value="NM_001267194.3"/>
</dbReference>
<dbReference type="RefSeq" id="NP_001254124.1">
    <property type="nucleotide sequence ID" value="NM_001267195.1"/>
</dbReference>
<dbReference type="RefSeq" id="NP_001379752.1">
    <molecule id="Q20432-1"/>
    <property type="nucleotide sequence ID" value="NM_001393116.1"/>
</dbReference>
<dbReference type="SMR" id="Q20432"/>
<dbReference type="BioGRID" id="50561">
    <property type="interactions" value="1"/>
</dbReference>
<dbReference type="FunCoup" id="Q20432">
    <property type="interactions" value="3117"/>
</dbReference>
<dbReference type="STRING" id="6239.F45E12.1b.1"/>
<dbReference type="PaxDb" id="6239-F45E12.1b"/>
<dbReference type="PeptideAtlas" id="Q20432"/>
<dbReference type="EnsemblMetazoa" id="F45E12.1a.1">
    <molecule id="Q20432-1"/>
    <property type="protein sequence ID" value="F45E12.1a.1"/>
    <property type="gene ID" value="WBGene00018474"/>
</dbReference>
<dbReference type="EnsemblMetazoa" id="F45E12.1a.2">
    <molecule id="Q20432-1"/>
    <property type="protein sequence ID" value="F45E12.1a.2"/>
    <property type="gene ID" value="WBGene00018474"/>
</dbReference>
<dbReference type="EnsemblMetazoa" id="F45E12.1b.1">
    <molecule id="Q20432-2"/>
    <property type="protein sequence ID" value="F45E12.1b.1"/>
    <property type="gene ID" value="WBGene00018474"/>
</dbReference>
<dbReference type="GeneID" id="185802"/>
<dbReference type="KEGG" id="cel:CELE_F45E12.1"/>
<dbReference type="UCSC" id="F45E12.1">
    <molecule id="Q20432-1"/>
    <property type="organism name" value="c. elegans"/>
</dbReference>
<dbReference type="AGR" id="WB:WBGene00018474"/>
<dbReference type="CTD" id="185802"/>
<dbReference type="WormBase" id="F45E12.1a">
    <molecule id="Q20432-1"/>
    <property type="protein sequence ID" value="CE02737"/>
    <property type="gene ID" value="WBGene00018474"/>
    <property type="gene designation" value="cnep-1"/>
</dbReference>
<dbReference type="WormBase" id="F45E12.1b">
    <molecule id="Q20432-2"/>
    <property type="protein sequence ID" value="CE46930"/>
    <property type="gene ID" value="WBGene00018474"/>
    <property type="gene designation" value="cnep-1"/>
</dbReference>
<dbReference type="eggNOG" id="KOG1605">
    <property type="taxonomic scope" value="Eukaryota"/>
</dbReference>
<dbReference type="GeneTree" id="ENSGT01040000240503"/>
<dbReference type="HOGENOM" id="CLU_020262_4_3_1"/>
<dbReference type="InParanoid" id="Q20432"/>
<dbReference type="OMA" id="RIWGFFM"/>
<dbReference type="OrthoDB" id="277011at2759"/>
<dbReference type="PhylomeDB" id="Q20432"/>
<dbReference type="Reactome" id="R-CEL-4419969">
    <property type="pathway name" value="Depolymerization of the Nuclear Lamina"/>
</dbReference>
<dbReference type="PRO" id="PR:Q20432"/>
<dbReference type="Proteomes" id="UP000001940">
    <property type="component" value="Chromosome II"/>
</dbReference>
<dbReference type="Bgee" id="WBGene00018474">
    <property type="expression patterns" value="Expressed in adult organism and 4 other cell types or tissues"/>
</dbReference>
<dbReference type="GO" id="GO:0005737">
    <property type="term" value="C:cytoplasm"/>
    <property type="evidence" value="ECO:0000250"/>
    <property type="project" value="UniProtKB"/>
</dbReference>
<dbReference type="GO" id="GO:0005789">
    <property type="term" value="C:endoplasmic reticulum membrane"/>
    <property type="evidence" value="ECO:0000250"/>
    <property type="project" value="UniProtKB"/>
</dbReference>
<dbReference type="GO" id="GO:0071595">
    <property type="term" value="C:Nem1-Spo7 phosphatase complex"/>
    <property type="evidence" value="ECO:0000250"/>
    <property type="project" value="UniProtKB"/>
</dbReference>
<dbReference type="GO" id="GO:0005635">
    <property type="term" value="C:nuclear envelope"/>
    <property type="evidence" value="ECO:0000314"/>
    <property type="project" value="WormBase"/>
</dbReference>
<dbReference type="GO" id="GO:0031965">
    <property type="term" value="C:nuclear membrane"/>
    <property type="evidence" value="ECO:0000250"/>
    <property type="project" value="UniProtKB"/>
</dbReference>
<dbReference type="GO" id="GO:0004721">
    <property type="term" value="F:phosphoprotein phosphatase activity"/>
    <property type="evidence" value="ECO:0000250"/>
    <property type="project" value="UniProtKB"/>
</dbReference>
<dbReference type="GO" id="GO:0004722">
    <property type="term" value="F:protein serine/threonine phosphatase activity"/>
    <property type="evidence" value="ECO:0000250"/>
    <property type="project" value="UniProtKB"/>
</dbReference>
<dbReference type="GO" id="GO:0006998">
    <property type="term" value="P:nuclear envelope organization"/>
    <property type="evidence" value="ECO:0000250"/>
    <property type="project" value="UniProtKB"/>
</dbReference>
<dbReference type="GO" id="GO:0031468">
    <property type="term" value="P:nuclear membrane reassembly"/>
    <property type="evidence" value="ECO:0000315"/>
    <property type="project" value="UniProtKB"/>
</dbReference>
<dbReference type="GO" id="GO:0010867">
    <property type="term" value="P:positive regulation of triglyceride biosynthetic process"/>
    <property type="evidence" value="ECO:0000250"/>
    <property type="project" value="UniProtKB"/>
</dbReference>
<dbReference type="GO" id="GO:0051783">
    <property type="term" value="P:regulation of nuclear division"/>
    <property type="evidence" value="ECO:0000315"/>
    <property type="project" value="WormBase"/>
</dbReference>
<dbReference type="CDD" id="cd07521">
    <property type="entry name" value="HAD_FCP1-like"/>
    <property type="match status" value="1"/>
</dbReference>
<dbReference type="FunFam" id="3.40.50.1000:FF:000044">
    <property type="entry name" value="CTD nuclear envelope phosphatase 1"/>
    <property type="match status" value="1"/>
</dbReference>
<dbReference type="Gene3D" id="3.40.50.1000">
    <property type="entry name" value="HAD superfamily/HAD-like"/>
    <property type="match status" value="1"/>
</dbReference>
<dbReference type="InterPro" id="IPR011948">
    <property type="entry name" value="Dullard_phosphatase"/>
</dbReference>
<dbReference type="InterPro" id="IPR004274">
    <property type="entry name" value="FCP1_dom"/>
</dbReference>
<dbReference type="InterPro" id="IPR036412">
    <property type="entry name" value="HAD-like_sf"/>
</dbReference>
<dbReference type="InterPro" id="IPR023214">
    <property type="entry name" value="HAD_sf"/>
</dbReference>
<dbReference type="InterPro" id="IPR050365">
    <property type="entry name" value="TIM50"/>
</dbReference>
<dbReference type="NCBIfam" id="TIGR02251">
    <property type="entry name" value="HIF-SF_euk"/>
    <property type="match status" value="1"/>
</dbReference>
<dbReference type="PANTHER" id="PTHR12210">
    <property type="entry name" value="DULLARD PROTEIN PHOSPHATASE"/>
    <property type="match status" value="1"/>
</dbReference>
<dbReference type="Pfam" id="PF03031">
    <property type="entry name" value="NIF"/>
    <property type="match status" value="1"/>
</dbReference>
<dbReference type="SMART" id="SM00577">
    <property type="entry name" value="CPDc"/>
    <property type="match status" value="1"/>
</dbReference>
<dbReference type="SUPFAM" id="SSF56784">
    <property type="entry name" value="HAD-like"/>
    <property type="match status" value="1"/>
</dbReference>
<dbReference type="PROSITE" id="PS50969">
    <property type="entry name" value="FCP1"/>
    <property type="match status" value="1"/>
</dbReference>
<sequence length="246" mass="28414">MTTIAQSVFCFLAGFFNFFLLYFRKTSRAYCKYQVVKYHSNIPMSPLTTHRLLTVKRKILVLDLDETLIHSHHDGVLRQTVKPGTPSDFTIRVVIDRHPVKFSVHERPHVDYFLSVVSQWYELVVFTASMEVYGTSVADRLDRGRGILKRRYFRQHCTMEVGGYTKDLSAIHPDLSSICILDNSPGAYRKFPHNAIPIPSWFSDPNDTCLLNLLPFLDALRFTSDVRSVLSRNMQALPETQSVQYY</sequence>
<accession>Q20432</accession>
<accession>H1ZUW4</accession>
<feature type="chain" id="PRO_0000297975" description="CTD nuclear envelope phosphatase 1 homolog">
    <location>
        <begin position="1"/>
        <end position="246"/>
    </location>
</feature>
<feature type="transmembrane region" description="Helical" evidence="1">
    <location>
        <begin position="3"/>
        <end position="23"/>
    </location>
</feature>
<feature type="domain" description="FCP1 homology" evidence="2">
    <location>
        <begin position="53"/>
        <end position="220"/>
    </location>
</feature>
<feature type="splice variant" id="VSP_056100" description="In isoform b." evidence="6">
    <original>M</original>
    <variation>MYVPNRQFGGGNPESHRRRDQKQASLVLRTM</variation>
    <location>
        <position position="1"/>
    </location>
</feature>
<organism>
    <name type="scientific">Caenorhabditis elegans</name>
    <dbReference type="NCBI Taxonomy" id="6239"/>
    <lineage>
        <taxon>Eukaryota</taxon>
        <taxon>Metazoa</taxon>
        <taxon>Ecdysozoa</taxon>
        <taxon>Nematoda</taxon>
        <taxon>Chromadorea</taxon>
        <taxon>Rhabditida</taxon>
        <taxon>Rhabditina</taxon>
        <taxon>Rhabditomorpha</taxon>
        <taxon>Rhabditoidea</taxon>
        <taxon>Rhabditidae</taxon>
        <taxon>Peloderinae</taxon>
        <taxon>Caenorhabditis</taxon>
    </lineage>
</organism>
<gene>
    <name type="primary">cnep-1</name>
    <name type="synonym">scpl-2</name>
    <name type="ORF">F45E12.1</name>
</gene>
<proteinExistence type="inferred from homology"/>
<protein>
    <recommendedName>
        <fullName>CTD nuclear envelope phosphatase 1 homolog</fullName>
        <shortName>CTDNEP1</shortName>
        <ecNumber>3.1.3.16</ecNumber>
    </recommendedName>
    <alternativeName>
        <fullName>Serine/threonine-protein phosphatase dullard homolog</fullName>
    </alternativeName>
    <alternativeName>
        <fullName>Small C-terminal domain phosphatase-like phosphatase 21</fullName>
    </alternativeName>
</protein>
<reference key="1">
    <citation type="journal article" date="1998" name="Science">
        <title>Genome sequence of the nematode C. elegans: a platform for investigating biology.</title>
        <authorList>
            <consortium name="The C. elegans sequencing consortium"/>
        </authorList>
    </citation>
    <scope>NUCLEOTIDE SEQUENCE [LARGE SCALE GENOMIC DNA]</scope>
    <scope>ALTERNATIVE SPLICING</scope>
    <source>
        <strain>Bristol N2</strain>
    </source>
</reference>
<reference key="2">
    <citation type="journal article" date="2002" name="Biochem. Biophys. Res. Commun.">
        <title>Molecular cloning and characterization of dullard: a novel gene required for neural development.</title>
        <authorList>
            <person name="Satow R."/>
            <person name="Chan T.C."/>
            <person name="Asashima M."/>
        </authorList>
    </citation>
    <scope>IDENTIFICATION</scope>
</reference>
<reference key="3">
    <citation type="journal article" date="2012" name="J. Biol. Chem.">
        <title>Nuclear envelope phosphatase-regulatory subunit 1 (formerly TMEM188) is the metazoan SPO7 ortholog and functions in the lipin activation pathway.</title>
        <authorList>
            <person name="Han S."/>
            <person name="Bahmanyar S."/>
            <person name="Zhang P."/>
            <person name="Grishin N."/>
            <person name="Oegema K."/>
            <person name="Crooke R."/>
            <person name="Graham M."/>
            <person name="Reue K."/>
            <person name="Dixon J.E."/>
            <person name="Goodman J.M."/>
        </authorList>
    </citation>
    <scope>FUNCTION</scope>
</reference>
<reference key="4">
    <citation type="journal article" date="2020" name="J. Cell Biol.">
        <title>Regulated lipid synthesis and LEM2/CHMP7 jointly control nuclear envelope closure.</title>
        <authorList>
            <person name="Penfield L."/>
            <person name="Shankar R."/>
            <person name="Szentgyoergyi E."/>
            <person name="Laffitte A."/>
            <person name="Mauro M.S."/>
            <person name="Audhya A."/>
            <person name="Mueller-Reichert T."/>
            <person name="Bahmanyar S."/>
        </authorList>
    </citation>
    <scope>FUNCTION</scope>
    <scope>SUBCELLULAR LOCATION</scope>
    <scope>DISRUPTION PHENOTYPE</scope>
</reference>
<reference key="5">
    <citation type="journal article" date="2022" name="Elife">
        <title>Ndc1 drives nuclear pore complex assembly independent of membrane biogenesis to promote nuclear formation and growth.</title>
        <authorList>
            <person name="Mauro M.S."/>
            <person name="Celma G."/>
            <person name="Zimyanin V."/>
            <person name="Magaj M.M."/>
            <person name="Gibson K.H."/>
            <person name="Redemann S."/>
            <person name="Bahmanyar S."/>
        </authorList>
    </citation>
    <scope>FUNCTION</scope>
    <scope>DISRUPTION PHENOTYPE</scope>
</reference>
<name>CNEP1_CAEEL</name>
<keyword id="KW-0025">Alternative splicing</keyword>
<keyword id="KW-0378">Hydrolase</keyword>
<keyword id="KW-0472">Membrane</keyword>
<keyword id="KW-0539">Nucleus</keyword>
<keyword id="KW-0904">Protein phosphatase</keyword>
<keyword id="KW-1185">Reference proteome</keyword>
<keyword id="KW-0812">Transmembrane</keyword>
<keyword id="KW-1133">Transmembrane helix</keyword>